<keyword id="KW-1003">Cell membrane</keyword>
<keyword id="KW-0325">Glycoprotein</keyword>
<keyword id="KW-0472">Membrane</keyword>
<keyword id="KW-0597">Phosphoprotein</keyword>
<keyword id="KW-1185">Reference proteome</keyword>
<keyword id="KW-0762">Sugar transport</keyword>
<keyword id="KW-0812">Transmembrane</keyword>
<keyword id="KW-1133">Transmembrane helix</keyword>
<keyword id="KW-0813">Transport</keyword>
<name>TRET1_DROWI</name>
<dbReference type="EMBL" id="CH963894">
    <property type="protein sequence ID" value="EDW77093.1"/>
    <property type="molecule type" value="Genomic_DNA"/>
</dbReference>
<dbReference type="SMR" id="B4MYA4"/>
<dbReference type="GlyCosmos" id="B4MYA4">
    <property type="glycosylation" value="1 site, No reported glycans"/>
</dbReference>
<dbReference type="EnsemblMetazoa" id="FBtr0252763">
    <property type="protein sequence ID" value="FBpp0251255"/>
    <property type="gene ID" value="FBgn0224097"/>
</dbReference>
<dbReference type="EnsemblMetazoa" id="XM_002066071.4">
    <property type="protein sequence ID" value="XP_002066107.1"/>
    <property type="gene ID" value="LOC6643376"/>
</dbReference>
<dbReference type="GeneID" id="6643376"/>
<dbReference type="KEGG" id="dwi:6643376"/>
<dbReference type="CTD" id="36248"/>
<dbReference type="eggNOG" id="KOG0254">
    <property type="taxonomic scope" value="Eukaryota"/>
</dbReference>
<dbReference type="HOGENOM" id="CLU_016710_0_0_1"/>
<dbReference type="OMA" id="IFIWTQS"/>
<dbReference type="OrthoDB" id="6339427at2759"/>
<dbReference type="PhylomeDB" id="B4MYA4"/>
<dbReference type="Proteomes" id="UP000007798">
    <property type="component" value="Unassembled WGS sequence"/>
</dbReference>
<dbReference type="GO" id="GO:0005886">
    <property type="term" value="C:plasma membrane"/>
    <property type="evidence" value="ECO:0000250"/>
    <property type="project" value="UniProtKB"/>
</dbReference>
<dbReference type="GO" id="GO:0051119">
    <property type="term" value="F:sugar transmembrane transporter activity"/>
    <property type="evidence" value="ECO:0007669"/>
    <property type="project" value="InterPro"/>
</dbReference>
<dbReference type="GO" id="GO:0015574">
    <property type="term" value="F:trehalose transmembrane transporter activity"/>
    <property type="evidence" value="ECO:0000250"/>
    <property type="project" value="UniProtKB"/>
</dbReference>
<dbReference type="GO" id="GO:0015771">
    <property type="term" value="P:trehalose transport"/>
    <property type="evidence" value="ECO:0000250"/>
    <property type="project" value="UniProtKB"/>
</dbReference>
<dbReference type="CDD" id="cd17358">
    <property type="entry name" value="MFS_GLUT6_8_Class3_like"/>
    <property type="match status" value="1"/>
</dbReference>
<dbReference type="FunFam" id="1.20.1250.20:FF:000055">
    <property type="entry name" value="Facilitated trehalose transporter Tret1-2 homolog"/>
    <property type="match status" value="1"/>
</dbReference>
<dbReference type="Gene3D" id="1.20.1250.20">
    <property type="entry name" value="MFS general substrate transporter like domains"/>
    <property type="match status" value="1"/>
</dbReference>
<dbReference type="InterPro" id="IPR020846">
    <property type="entry name" value="MFS_dom"/>
</dbReference>
<dbReference type="InterPro" id="IPR044775">
    <property type="entry name" value="MFS_ERD6/Tret1-like"/>
</dbReference>
<dbReference type="InterPro" id="IPR005828">
    <property type="entry name" value="MFS_sugar_transport-like"/>
</dbReference>
<dbReference type="InterPro" id="IPR036259">
    <property type="entry name" value="MFS_trans_sf"/>
</dbReference>
<dbReference type="InterPro" id="IPR050549">
    <property type="entry name" value="MFS_Trehalose_Transporter"/>
</dbReference>
<dbReference type="InterPro" id="IPR003663">
    <property type="entry name" value="Sugar/inositol_transpt"/>
</dbReference>
<dbReference type="InterPro" id="IPR005829">
    <property type="entry name" value="Sugar_transporter_CS"/>
</dbReference>
<dbReference type="NCBIfam" id="TIGR00879">
    <property type="entry name" value="SP"/>
    <property type="match status" value="1"/>
</dbReference>
<dbReference type="PANTHER" id="PTHR48021">
    <property type="match status" value="1"/>
</dbReference>
<dbReference type="PANTHER" id="PTHR48021:SF96">
    <property type="entry name" value="FACILITATED TREHALOSE TRANSPORTER TRET1-1-RELATED"/>
    <property type="match status" value="1"/>
</dbReference>
<dbReference type="Pfam" id="PF00083">
    <property type="entry name" value="Sugar_tr"/>
    <property type="match status" value="1"/>
</dbReference>
<dbReference type="PRINTS" id="PR00171">
    <property type="entry name" value="SUGRTRNSPORT"/>
</dbReference>
<dbReference type="SUPFAM" id="SSF103473">
    <property type="entry name" value="MFS general substrate transporter"/>
    <property type="match status" value="1"/>
</dbReference>
<dbReference type="PROSITE" id="PS50850">
    <property type="entry name" value="MFS"/>
    <property type="match status" value="1"/>
</dbReference>
<dbReference type="PROSITE" id="PS00216">
    <property type="entry name" value="SUGAR_TRANSPORT_1"/>
    <property type="match status" value="2"/>
</dbReference>
<dbReference type="PROSITE" id="PS00217">
    <property type="entry name" value="SUGAR_TRANSPORT_2"/>
    <property type="match status" value="1"/>
</dbReference>
<sequence>MSGRDNRGAGGGGGGGGGGSGGGHHHHQPLSSAMGKLKEKLTRVGDDLGYHRVESNLSTSNTATSLDTILPEDPFLFPQEAPQRHPQQSPSQSQQQQRRFLDDEPPLSFRPLLEDDDINEPPTQQQPQQQHQQQHRSPLSASGSLELTPLPPPPTTLEPRDRQQRSIPGEDLQRSKQSLKGSRVSFEKTNSKQAAESSDEDSFEDKRIGFQQQKATSVDHKGILKDLKHILANDNRRQFQAKKHVSLDVKGTRFLQDLLKESSSEEEFHKTRREFQGRKHQSLDPRVTFKLDKVLQGSSTDSDEEGDDAEHKRLIHRPKDITKPVIIDLKDLESESDEDFLTSRQHFQQQRSISTDSRKSRRLYEMDDMGNKRGDNIRHAVPFVRQITEDGKPKLEVYRPTTNPIYIWTQVLAALSVSLGSLVVGFVSAYTSPALITMTNGNITSFEVTPQAASWVGGIMPLAGLLGGIAGGPFIEYLGRRNTILTTAVPFIVSSLLIACAVNITMVLLGRFLAGFCVGIASLSLPVYLGETVQPEVRGTLGLLPTAFGNIGILLCFVAGTYMDWSMLAFLGAALPVPFLILMFLIPETPRWYVSRGREERARKALSWLRGKEADVEPELKGLLRSQADADRSATQNTMLELLKRNNLKPLSISLGLMFFQQLSGINAVIFYTVQIFKDAGSTIDGNVCTIIVGIVNFMATFIGIILIDRAGRKILLYVSNVAMIITLFVLGGFFYCKDKAGIDVSNVGWLPLSCFVVYILGFSLGFGPIPWLMMGEILPAKIRGSAASVATAFNWTCTFVVTKTFQDMLDVIGSYGAFWLFGAICFIGLFFVIIYVPETQGKTLEDIERKMMGRVRRMSSVANIKPLSFNM</sequence>
<organism>
    <name type="scientific">Drosophila willistoni</name>
    <name type="common">Fruit fly</name>
    <dbReference type="NCBI Taxonomy" id="7260"/>
    <lineage>
        <taxon>Eukaryota</taxon>
        <taxon>Metazoa</taxon>
        <taxon>Ecdysozoa</taxon>
        <taxon>Arthropoda</taxon>
        <taxon>Hexapoda</taxon>
        <taxon>Insecta</taxon>
        <taxon>Pterygota</taxon>
        <taxon>Neoptera</taxon>
        <taxon>Endopterygota</taxon>
        <taxon>Diptera</taxon>
        <taxon>Brachycera</taxon>
        <taxon>Muscomorpha</taxon>
        <taxon>Ephydroidea</taxon>
        <taxon>Drosophilidae</taxon>
        <taxon>Drosophila</taxon>
        <taxon>Sophophora</taxon>
    </lineage>
</organism>
<evidence type="ECO:0000250" key="1">
    <source>
        <dbReference type="UniProtKB" id="A1Z8N1"/>
    </source>
</evidence>
<evidence type="ECO:0000255" key="2"/>
<evidence type="ECO:0000256" key="3">
    <source>
        <dbReference type="SAM" id="MobiDB-lite"/>
    </source>
</evidence>
<evidence type="ECO:0000312" key="4">
    <source>
        <dbReference type="EMBL" id="EDW77093.1"/>
    </source>
</evidence>
<comment type="function">
    <text evidence="1">Low-capacity facilitative transporter for trehalose. Does not transport maltose, sucrose or lactose. Mediates the bidirectional transfer of trehalose. Responsible for the transport of trehalose synthesized in the fat body and the incorporation of trehalose into other tissues that require a carbon source, thereby regulating trehalose levels in the hemolymph (By similarity).</text>
</comment>
<comment type="subcellular location">
    <subcellularLocation>
        <location evidence="1">Cell membrane</location>
        <topology evidence="1">Multi-pass membrane protein</topology>
    </subcellularLocation>
</comment>
<comment type="similarity">
    <text evidence="1 2">Belongs to the major facilitator superfamily. Sugar transporter (TC 2.A.1.1) family. Trehalose transporter subfamily.</text>
</comment>
<reference evidence="4" key="1">
    <citation type="journal article" date="2007" name="Nature">
        <title>Evolution of genes and genomes on the Drosophila phylogeny.</title>
        <authorList>
            <consortium name="Drosophila 12 genomes consortium"/>
        </authorList>
    </citation>
    <scope>NUCLEOTIDE SEQUENCE [LARGE SCALE GENOMIC DNA]</scope>
    <source>
        <strain evidence="4">Tucson 14030-0811.24</strain>
    </source>
</reference>
<feature type="chain" id="PRO_0000395549" description="Facilitated trehalose transporter Tret1">
    <location>
        <begin position="1"/>
        <end position="872"/>
    </location>
</feature>
<feature type="topological domain" description="Cytoplasmic" evidence="2">
    <location>
        <begin position="1"/>
        <end position="406"/>
    </location>
</feature>
<feature type="transmembrane region" description="Helical; Name=1" evidence="2">
    <location>
        <begin position="407"/>
        <end position="427"/>
    </location>
</feature>
<feature type="topological domain" description="Extracellular" evidence="2">
    <location>
        <begin position="428"/>
        <end position="454"/>
    </location>
</feature>
<feature type="transmembrane region" description="Helical; Name=2" evidence="2">
    <location>
        <begin position="455"/>
        <end position="475"/>
    </location>
</feature>
<feature type="topological domain" description="Cytoplasmic" evidence="2">
    <location>
        <begin position="476"/>
        <end position="488"/>
    </location>
</feature>
<feature type="transmembrane region" description="Helical; Name=3" evidence="2">
    <location>
        <begin position="489"/>
        <end position="509"/>
    </location>
</feature>
<feature type="topological domain" description="Extracellular" evidence="2">
    <location>
        <begin position="510"/>
        <end position="511"/>
    </location>
</feature>
<feature type="transmembrane region" description="Helical; Name=4" evidence="2">
    <location>
        <begin position="512"/>
        <end position="532"/>
    </location>
</feature>
<feature type="topological domain" description="Cytoplasmic" evidence="2">
    <location>
        <begin position="533"/>
        <end position="538"/>
    </location>
</feature>
<feature type="transmembrane region" description="Helical; Name=5" evidence="2">
    <location>
        <begin position="539"/>
        <end position="559"/>
    </location>
</feature>
<feature type="topological domain" description="Extracellular" evidence="2">
    <location>
        <begin position="560"/>
        <end position="566"/>
    </location>
</feature>
<feature type="transmembrane region" description="Helical; Name=6" evidence="2">
    <location>
        <begin position="567"/>
        <end position="587"/>
    </location>
</feature>
<feature type="topological domain" description="Cytoplasmic" evidence="2">
    <location>
        <begin position="588"/>
        <end position="650"/>
    </location>
</feature>
<feature type="transmembrane region" description="Helical; Name=7" evidence="2">
    <location>
        <begin position="651"/>
        <end position="671"/>
    </location>
</feature>
<feature type="topological domain" description="Extracellular" evidence="2">
    <location>
        <begin position="672"/>
        <end position="687"/>
    </location>
</feature>
<feature type="transmembrane region" description="Helical; Name=8" evidence="2">
    <location>
        <begin position="688"/>
        <end position="708"/>
    </location>
</feature>
<feature type="topological domain" description="Cytoplasmic" evidence="2">
    <location>
        <begin position="709"/>
        <end position="714"/>
    </location>
</feature>
<feature type="transmembrane region" description="Helical; Name=9" evidence="2">
    <location>
        <begin position="715"/>
        <end position="735"/>
    </location>
</feature>
<feature type="topological domain" description="Extracellular" evidence="2">
    <location>
        <begin position="736"/>
        <end position="755"/>
    </location>
</feature>
<feature type="transmembrane region" description="Helical; Name=10" evidence="2">
    <location>
        <begin position="756"/>
        <end position="776"/>
    </location>
</feature>
<feature type="topological domain" description="Cytoplasmic" evidence="2">
    <location>
        <begin position="777"/>
        <end position="784"/>
    </location>
</feature>
<feature type="transmembrane region" description="Helical; Name=11" evidence="2">
    <location>
        <begin position="785"/>
        <end position="803"/>
    </location>
</feature>
<feature type="topological domain" description="Extracellular" evidence="2">
    <location>
        <begin position="804"/>
        <end position="816"/>
    </location>
</feature>
<feature type="transmembrane region" description="Helical; Name=12" evidence="2">
    <location>
        <begin position="817"/>
        <end position="837"/>
    </location>
</feature>
<feature type="topological domain" description="Cytoplasmic" evidence="2">
    <location>
        <begin position="838"/>
        <end position="872"/>
    </location>
</feature>
<feature type="region of interest" description="Disordered" evidence="3">
    <location>
        <begin position="1"/>
        <end position="40"/>
    </location>
</feature>
<feature type="region of interest" description="Disordered" evidence="3">
    <location>
        <begin position="53"/>
        <end position="217"/>
    </location>
</feature>
<feature type="region of interest" description="Disordered" evidence="3">
    <location>
        <begin position="262"/>
        <end position="281"/>
    </location>
</feature>
<feature type="region of interest" description="Disordered" evidence="3">
    <location>
        <begin position="293"/>
        <end position="315"/>
    </location>
</feature>
<feature type="region of interest" description="Disordered" evidence="3">
    <location>
        <begin position="340"/>
        <end position="361"/>
    </location>
</feature>
<feature type="compositionally biased region" description="Gly residues" evidence="3">
    <location>
        <begin position="8"/>
        <end position="22"/>
    </location>
</feature>
<feature type="compositionally biased region" description="Low complexity" evidence="3">
    <location>
        <begin position="55"/>
        <end position="68"/>
    </location>
</feature>
<feature type="compositionally biased region" description="Low complexity" evidence="3">
    <location>
        <begin position="84"/>
        <end position="98"/>
    </location>
</feature>
<feature type="compositionally biased region" description="Low complexity" evidence="3">
    <location>
        <begin position="121"/>
        <end position="132"/>
    </location>
</feature>
<feature type="compositionally biased region" description="Polar residues" evidence="3">
    <location>
        <begin position="344"/>
        <end position="355"/>
    </location>
</feature>
<feature type="modified residue" description="Phosphoserine" evidence="1">
    <location>
        <position position="262"/>
    </location>
</feature>
<feature type="modified residue" description="Phosphoserine" evidence="1">
    <location>
        <position position="263"/>
    </location>
</feature>
<feature type="modified residue" description="Phosphoserine" evidence="1">
    <location>
        <position position="264"/>
    </location>
</feature>
<feature type="modified residue" description="Phosphoserine" evidence="1">
    <location>
        <position position="334"/>
    </location>
</feature>
<feature type="modified residue" description="Phosphoserine" evidence="1">
    <location>
        <position position="336"/>
    </location>
</feature>
<feature type="modified residue" description="Phosphoserine" evidence="1">
    <location>
        <position position="860"/>
    </location>
</feature>
<feature type="modified residue" description="Phosphoserine" evidence="1">
    <location>
        <position position="861"/>
    </location>
</feature>
<feature type="glycosylation site" description="N-linked (GlcNAc...) asparagine" evidence="2">
    <location>
        <position position="442"/>
    </location>
</feature>
<gene>
    <name evidence="1" type="primary">Tret1</name>
    <name type="ORF">GK22112</name>
</gene>
<proteinExistence type="inferred from homology"/>
<accession>B4MYA4</accession>
<protein>
    <recommendedName>
        <fullName evidence="1">Facilitated trehalose transporter Tret1</fullName>
    </recommendedName>
</protein>